<dbReference type="EMBL" id="AE014299">
    <property type="protein sequence ID" value="AAN53327.1"/>
    <property type="molecule type" value="Genomic_DNA"/>
</dbReference>
<dbReference type="RefSeq" id="NP_715882.1">
    <property type="nucleotide sequence ID" value="NC_004347.2"/>
</dbReference>
<dbReference type="RefSeq" id="WP_011070623.1">
    <property type="nucleotide sequence ID" value="NZ_CP053946.1"/>
</dbReference>
<dbReference type="SMR" id="Q8EK58"/>
<dbReference type="STRING" id="211586.SO_0242"/>
<dbReference type="PaxDb" id="211586-SO_0242"/>
<dbReference type="GeneID" id="94726197"/>
<dbReference type="KEGG" id="son:SO_0242"/>
<dbReference type="PATRIC" id="fig|211586.12.peg.230"/>
<dbReference type="eggNOG" id="COG0198">
    <property type="taxonomic scope" value="Bacteria"/>
</dbReference>
<dbReference type="HOGENOM" id="CLU_093315_2_2_6"/>
<dbReference type="OrthoDB" id="9807419at2"/>
<dbReference type="PhylomeDB" id="Q8EK58"/>
<dbReference type="BioCyc" id="SONE211586:G1GMP-231-MONOMER"/>
<dbReference type="Proteomes" id="UP000008186">
    <property type="component" value="Chromosome"/>
</dbReference>
<dbReference type="GO" id="GO:0022625">
    <property type="term" value="C:cytosolic large ribosomal subunit"/>
    <property type="evidence" value="ECO:0000318"/>
    <property type="project" value="GO_Central"/>
</dbReference>
<dbReference type="GO" id="GO:0019843">
    <property type="term" value="F:rRNA binding"/>
    <property type="evidence" value="ECO:0007669"/>
    <property type="project" value="UniProtKB-UniRule"/>
</dbReference>
<dbReference type="GO" id="GO:0003735">
    <property type="term" value="F:structural constituent of ribosome"/>
    <property type="evidence" value="ECO:0007669"/>
    <property type="project" value="InterPro"/>
</dbReference>
<dbReference type="GO" id="GO:0006412">
    <property type="term" value="P:translation"/>
    <property type="evidence" value="ECO:0000318"/>
    <property type="project" value="GO_Central"/>
</dbReference>
<dbReference type="CDD" id="cd06089">
    <property type="entry name" value="KOW_RPL26"/>
    <property type="match status" value="1"/>
</dbReference>
<dbReference type="FunFam" id="2.30.30.30:FF:000004">
    <property type="entry name" value="50S ribosomal protein L24"/>
    <property type="match status" value="1"/>
</dbReference>
<dbReference type="Gene3D" id="2.30.30.30">
    <property type="match status" value="1"/>
</dbReference>
<dbReference type="HAMAP" id="MF_01326_B">
    <property type="entry name" value="Ribosomal_uL24_B"/>
    <property type="match status" value="1"/>
</dbReference>
<dbReference type="InterPro" id="IPR005824">
    <property type="entry name" value="KOW"/>
</dbReference>
<dbReference type="InterPro" id="IPR014722">
    <property type="entry name" value="Rib_uL2_dom2"/>
</dbReference>
<dbReference type="InterPro" id="IPR003256">
    <property type="entry name" value="Ribosomal_uL24"/>
</dbReference>
<dbReference type="InterPro" id="IPR041988">
    <property type="entry name" value="Ribosomal_uL24_KOW"/>
</dbReference>
<dbReference type="InterPro" id="IPR008991">
    <property type="entry name" value="Translation_prot_SH3-like_sf"/>
</dbReference>
<dbReference type="NCBIfam" id="TIGR01079">
    <property type="entry name" value="rplX_bact"/>
    <property type="match status" value="1"/>
</dbReference>
<dbReference type="PANTHER" id="PTHR12903">
    <property type="entry name" value="MITOCHONDRIAL RIBOSOMAL PROTEIN L24"/>
    <property type="match status" value="1"/>
</dbReference>
<dbReference type="Pfam" id="PF00467">
    <property type="entry name" value="KOW"/>
    <property type="match status" value="1"/>
</dbReference>
<dbReference type="Pfam" id="PF17136">
    <property type="entry name" value="ribosomal_L24"/>
    <property type="match status" value="1"/>
</dbReference>
<dbReference type="SMART" id="SM00739">
    <property type="entry name" value="KOW"/>
    <property type="match status" value="1"/>
</dbReference>
<dbReference type="SUPFAM" id="SSF50104">
    <property type="entry name" value="Translation proteins SH3-like domain"/>
    <property type="match status" value="1"/>
</dbReference>
<comment type="function">
    <text evidence="1">One of two assembly initiator proteins, it binds directly to the 5'-end of the 23S rRNA, where it nucleates assembly of the 50S subunit.</text>
</comment>
<comment type="function">
    <text evidence="1">One of the proteins that surrounds the polypeptide exit tunnel on the outside of the subunit.</text>
</comment>
<comment type="subunit">
    <text evidence="1">Part of the 50S ribosomal subunit.</text>
</comment>
<comment type="similarity">
    <text evidence="1">Belongs to the universal ribosomal protein uL24 family.</text>
</comment>
<sequence length="104" mass="11318">MAAKIRRQDEVIVLAGKDKGKRAKVAQVLPTGKLIVEGINLVKKHQKPNPQLGVAGGIVEKEAPIQASNVAIFNPVTGKADRVGFRFEDGKKVRFFKSNSELVK</sequence>
<accession>Q8EK58</accession>
<name>RL24_SHEON</name>
<reference key="1">
    <citation type="journal article" date="2002" name="Nat. Biotechnol.">
        <title>Genome sequence of the dissimilatory metal ion-reducing bacterium Shewanella oneidensis.</title>
        <authorList>
            <person name="Heidelberg J.F."/>
            <person name="Paulsen I.T."/>
            <person name="Nelson K.E."/>
            <person name="Gaidos E.J."/>
            <person name="Nelson W.C."/>
            <person name="Read T.D."/>
            <person name="Eisen J.A."/>
            <person name="Seshadri R."/>
            <person name="Ward N.L."/>
            <person name="Methe B.A."/>
            <person name="Clayton R.A."/>
            <person name="Meyer T."/>
            <person name="Tsapin A."/>
            <person name="Scott J."/>
            <person name="Beanan M.J."/>
            <person name="Brinkac L.M."/>
            <person name="Daugherty S.C."/>
            <person name="DeBoy R.T."/>
            <person name="Dodson R.J."/>
            <person name="Durkin A.S."/>
            <person name="Haft D.H."/>
            <person name="Kolonay J.F."/>
            <person name="Madupu R."/>
            <person name="Peterson J.D."/>
            <person name="Umayam L.A."/>
            <person name="White O."/>
            <person name="Wolf A.M."/>
            <person name="Vamathevan J.J."/>
            <person name="Weidman J.F."/>
            <person name="Impraim M."/>
            <person name="Lee K."/>
            <person name="Berry K.J."/>
            <person name="Lee C."/>
            <person name="Mueller J."/>
            <person name="Khouri H.M."/>
            <person name="Gill J."/>
            <person name="Utterback T.R."/>
            <person name="McDonald L.A."/>
            <person name="Feldblyum T.V."/>
            <person name="Smith H.O."/>
            <person name="Venter J.C."/>
            <person name="Nealson K.H."/>
            <person name="Fraser C.M."/>
        </authorList>
    </citation>
    <scope>NUCLEOTIDE SEQUENCE [LARGE SCALE GENOMIC DNA]</scope>
    <source>
        <strain>ATCC 700550 / JCM 31522 / CIP 106686 / LMG 19005 / NCIMB 14063 / MR-1</strain>
    </source>
</reference>
<gene>
    <name evidence="1" type="primary">rplX</name>
    <name type="ordered locus">SO_0242</name>
</gene>
<protein>
    <recommendedName>
        <fullName evidence="1">Large ribosomal subunit protein uL24</fullName>
    </recommendedName>
    <alternativeName>
        <fullName evidence="2">50S ribosomal protein L24</fullName>
    </alternativeName>
</protein>
<organism>
    <name type="scientific">Shewanella oneidensis (strain ATCC 700550 / JCM 31522 / CIP 106686 / LMG 19005 / NCIMB 14063 / MR-1)</name>
    <dbReference type="NCBI Taxonomy" id="211586"/>
    <lineage>
        <taxon>Bacteria</taxon>
        <taxon>Pseudomonadati</taxon>
        <taxon>Pseudomonadota</taxon>
        <taxon>Gammaproteobacteria</taxon>
        <taxon>Alteromonadales</taxon>
        <taxon>Shewanellaceae</taxon>
        <taxon>Shewanella</taxon>
    </lineage>
</organism>
<keyword id="KW-1185">Reference proteome</keyword>
<keyword id="KW-0687">Ribonucleoprotein</keyword>
<keyword id="KW-0689">Ribosomal protein</keyword>
<keyword id="KW-0694">RNA-binding</keyword>
<keyword id="KW-0699">rRNA-binding</keyword>
<feature type="chain" id="PRO_0000130710" description="Large ribosomal subunit protein uL24">
    <location>
        <begin position="1"/>
        <end position="104"/>
    </location>
</feature>
<evidence type="ECO:0000255" key="1">
    <source>
        <dbReference type="HAMAP-Rule" id="MF_01326"/>
    </source>
</evidence>
<evidence type="ECO:0000305" key="2"/>
<proteinExistence type="inferred from homology"/>